<accession>Q1QY27</accession>
<gene>
    <name evidence="1" type="primary">miaA</name>
    <name type="ordered locus">Csal_1276</name>
</gene>
<organism>
    <name type="scientific">Chromohalobacter salexigens (strain ATCC BAA-138 / DSM 3043 / CIP 106854 / NCIMB 13768 / 1H11)</name>
    <dbReference type="NCBI Taxonomy" id="290398"/>
    <lineage>
        <taxon>Bacteria</taxon>
        <taxon>Pseudomonadati</taxon>
        <taxon>Pseudomonadota</taxon>
        <taxon>Gammaproteobacteria</taxon>
        <taxon>Oceanospirillales</taxon>
        <taxon>Halomonadaceae</taxon>
        <taxon>Chromohalobacter</taxon>
    </lineage>
</organism>
<protein>
    <recommendedName>
        <fullName evidence="1">tRNA dimethylallyltransferase</fullName>
        <ecNumber evidence="1">2.5.1.75</ecNumber>
    </recommendedName>
    <alternativeName>
        <fullName evidence="1">Dimethylallyl diphosphate:tRNA dimethylallyltransferase</fullName>
        <shortName evidence="1">DMAPP:tRNA dimethylallyltransferase</shortName>
        <shortName evidence="1">DMATase</shortName>
    </alternativeName>
    <alternativeName>
        <fullName evidence="1">Isopentenyl-diphosphate:tRNA isopentenyltransferase</fullName>
        <shortName evidence="1">IPP transferase</shortName>
        <shortName evidence="1">IPPT</shortName>
        <shortName evidence="1">IPTase</shortName>
    </alternativeName>
</protein>
<reference key="1">
    <citation type="journal article" date="2011" name="Stand. Genomic Sci.">
        <title>Complete genome sequence of the halophilic and highly halotolerant Chromohalobacter salexigens type strain (1H11(T)).</title>
        <authorList>
            <person name="Copeland A."/>
            <person name="O'Connor K."/>
            <person name="Lucas S."/>
            <person name="Lapidus A."/>
            <person name="Berry K.W."/>
            <person name="Detter J.C."/>
            <person name="Del Rio T.G."/>
            <person name="Hammon N."/>
            <person name="Dalin E."/>
            <person name="Tice H."/>
            <person name="Pitluck S."/>
            <person name="Bruce D."/>
            <person name="Goodwin L."/>
            <person name="Han C."/>
            <person name="Tapia R."/>
            <person name="Saunders E."/>
            <person name="Schmutz J."/>
            <person name="Brettin T."/>
            <person name="Larimer F."/>
            <person name="Land M."/>
            <person name="Hauser L."/>
            <person name="Vargas C."/>
            <person name="Nieto J.J."/>
            <person name="Kyrpides N.C."/>
            <person name="Ivanova N."/>
            <person name="Goker M."/>
            <person name="Klenk H.P."/>
            <person name="Csonka L.N."/>
            <person name="Woyke T."/>
        </authorList>
    </citation>
    <scope>NUCLEOTIDE SEQUENCE [LARGE SCALE GENOMIC DNA]</scope>
    <source>
        <strain>ATCC BAA-138 / DSM 3043 / CIP 106854 / NCIMB 13768 / 1H11</strain>
    </source>
</reference>
<sequence>MSDTRPLALLLMGPTAAGKTDLAIALRERLGGELISVDSAMIYRGMDIGTAKPSAQELARAPHRLIDIRDPAETYSAAEFRDDALAEMRDISSQGRTPILVGGTMMYIKRLIDGVASLPARDPALREALNARAESEGLVALHRELSRVDPVAAETIHPHNRQRLLRALEVYQLTGRALGELWAEQARETFPWRLVSIALAPNARHVLHARIAERFDSMLAAGFRDEVAALQARGDLHRGLPAIRCVGYRQMWEHLRGETDAATMRERGLAATRQLAKRQLTWLRGWEGVHWIDSDASDAHEQVLKIVRGSST</sequence>
<evidence type="ECO:0000255" key="1">
    <source>
        <dbReference type="HAMAP-Rule" id="MF_00185"/>
    </source>
</evidence>
<dbReference type="EC" id="2.5.1.75" evidence="1"/>
<dbReference type="EMBL" id="CP000285">
    <property type="protein sequence ID" value="ABE58631.1"/>
    <property type="molecule type" value="Genomic_DNA"/>
</dbReference>
<dbReference type="RefSeq" id="WP_011506577.1">
    <property type="nucleotide sequence ID" value="NC_007963.1"/>
</dbReference>
<dbReference type="SMR" id="Q1QY27"/>
<dbReference type="STRING" id="290398.Csal_1276"/>
<dbReference type="GeneID" id="95334016"/>
<dbReference type="KEGG" id="csa:Csal_1276"/>
<dbReference type="eggNOG" id="COG0324">
    <property type="taxonomic scope" value="Bacteria"/>
</dbReference>
<dbReference type="HOGENOM" id="CLU_032616_0_0_6"/>
<dbReference type="OrthoDB" id="9776390at2"/>
<dbReference type="Proteomes" id="UP000000239">
    <property type="component" value="Chromosome"/>
</dbReference>
<dbReference type="GO" id="GO:0005524">
    <property type="term" value="F:ATP binding"/>
    <property type="evidence" value="ECO:0007669"/>
    <property type="project" value="UniProtKB-UniRule"/>
</dbReference>
<dbReference type="GO" id="GO:0052381">
    <property type="term" value="F:tRNA dimethylallyltransferase activity"/>
    <property type="evidence" value="ECO:0007669"/>
    <property type="project" value="UniProtKB-UniRule"/>
</dbReference>
<dbReference type="GO" id="GO:0006400">
    <property type="term" value="P:tRNA modification"/>
    <property type="evidence" value="ECO:0007669"/>
    <property type="project" value="TreeGrafter"/>
</dbReference>
<dbReference type="FunFam" id="1.10.20.140:FF:000001">
    <property type="entry name" value="tRNA dimethylallyltransferase"/>
    <property type="match status" value="1"/>
</dbReference>
<dbReference type="Gene3D" id="1.10.20.140">
    <property type="match status" value="1"/>
</dbReference>
<dbReference type="Gene3D" id="3.40.50.300">
    <property type="entry name" value="P-loop containing nucleotide triphosphate hydrolases"/>
    <property type="match status" value="1"/>
</dbReference>
<dbReference type="HAMAP" id="MF_00185">
    <property type="entry name" value="IPP_trans"/>
    <property type="match status" value="1"/>
</dbReference>
<dbReference type="InterPro" id="IPR039657">
    <property type="entry name" value="Dimethylallyltransferase"/>
</dbReference>
<dbReference type="InterPro" id="IPR018022">
    <property type="entry name" value="IPT"/>
</dbReference>
<dbReference type="InterPro" id="IPR027417">
    <property type="entry name" value="P-loop_NTPase"/>
</dbReference>
<dbReference type="NCBIfam" id="TIGR00174">
    <property type="entry name" value="miaA"/>
    <property type="match status" value="1"/>
</dbReference>
<dbReference type="PANTHER" id="PTHR11088">
    <property type="entry name" value="TRNA DIMETHYLALLYLTRANSFERASE"/>
    <property type="match status" value="1"/>
</dbReference>
<dbReference type="PANTHER" id="PTHR11088:SF60">
    <property type="entry name" value="TRNA DIMETHYLALLYLTRANSFERASE"/>
    <property type="match status" value="1"/>
</dbReference>
<dbReference type="Pfam" id="PF01715">
    <property type="entry name" value="IPPT"/>
    <property type="match status" value="1"/>
</dbReference>
<dbReference type="SUPFAM" id="SSF52540">
    <property type="entry name" value="P-loop containing nucleoside triphosphate hydrolases"/>
    <property type="match status" value="1"/>
</dbReference>
<keyword id="KW-0067">ATP-binding</keyword>
<keyword id="KW-0460">Magnesium</keyword>
<keyword id="KW-0547">Nucleotide-binding</keyword>
<keyword id="KW-1185">Reference proteome</keyword>
<keyword id="KW-0808">Transferase</keyword>
<keyword id="KW-0819">tRNA processing</keyword>
<proteinExistence type="inferred from homology"/>
<feature type="chain" id="PRO_0000377122" description="tRNA dimethylallyltransferase">
    <location>
        <begin position="1"/>
        <end position="312"/>
    </location>
</feature>
<feature type="region of interest" description="Interaction with substrate tRNA" evidence="1">
    <location>
        <begin position="38"/>
        <end position="41"/>
    </location>
</feature>
<feature type="region of interest" description="Interaction with substrate tRNA" evidence="1">
    <location>
        <begin position="162"/>
        <end position="166"/>
    </location>
</feature>
<feature type="region of interest" description="Interaction with substrate tRNA" evidence="1">
    <location>
        <begin position="244"/>
        <end position="249"/>
    </location>
</feature>
<feature type="binding site" evidence="1">
    <location>
        <begin position="13"/>
        <end position="20"/>
    </location>
    <ligand>
        <name>ATP</name>
        <dbReference type="ChEBI" id="CHEBI:30616"/>
    </ligand>
</feature>
<feature type="binding site" evidence="1">
    <location>
        <begin position="15"/>
        <end position="20"/>
    </location>
    <ligand>
        <name>substrate</name>
    </ligand>
</feature>
<feature type="site" description="Interaction with substrate tRNA" evidence="1">
    <location>
        <position position="104"/>
    </location>
</feature>
<feature type="site" description="Interaction with substrate tRNA" evidence="1">
    <location>
        <position position="126"/>
    </location>
</feature>
<comment type="function">
    <text evidence="1">Catalyzes the transfer of a dimethylallyl group onto the adenine at position 37 in tRNAs that read codons beginning with uridine, leading to the formation of N6-(dimethylallyl)adenosine (i(6)A).</text>
</comment>
<comment type="catalytic activity">
    <reaction evidence="1">
        <text>adenosine(37) in tRNA + dimethylallyl diphosphate = N(6)-dimethylallyladenosine(37) in tRNA + diphosphate</text>
        <dbReference type="Rhea" id="RHEA:26482"/>
        <dbReference type="Rhea" id="RHEA-COMP:10162"/>
        <dbReference type="Rhea" id="RHEA-COMP:10375"/>
        <dbReference type="ChEBI" id="CHEBI:33019"/>
        <dbReference type="ChEBI" id="CHEBI:57623"/>
        <dbReference type="ChEBI" id="CHEBI:74411"/>
        <dbReference type="ChEBI" id="CHEBI:74415"/>
        <dbReference type="EC" id="2.5.1.75"/>
    </reaction>
</comment>
<comment type="cofactor">
    <cofactor evidence="1">
        <name>Mg(2+)</name>
        <dbReference type="ChEBI" id="CHEBI:18420"/>
    </cofactor>
</comment>
<comment type="subunit">
    <text evidence="1">Monomer.</text>
</comment>
<comment type="similarity">
    <text evidence="1">Belongs to the IPP transferase family.</text>
</comment>
<name>MIAA_CHRSD</name>